<gene>
    <name evidence="1" type="primary">thiC1</name>
    <name type="synonym">thiC-1</name>
    <name type="ordered locus">SSO1324</name>
</gene>
<proteinExistence type="inferred from homology"/>
<protein>
    <recommendedName>
        <fullName evidence="1">Phosphomethylpyrimidine synthase 1</fullName>
        <ecNumber evidence="1">4.1.99.17</ecNumber>
    </recommendedName>
    <alternativeName>
        <fullName evidence="1">Hydroxymethylpyrimidine phosphate synthase 1</fullName>
        <shortName evidence="1">HMP-P synthase 1</shortName>
        <shortName evidence="1">HMP-phosphate synthase 1</shortName>
        <shortName evidence="1">HMPP synthase 1</shortName>
    </alternativeName>
    <alternativeName>
        <fullName evidence="1">Thiamine biosynthesis protein ThiC 1</fullName>
    </alternativeName>
</protein>
<accession>Q97YJ8</accession>
<keyword id="KW-0004">4Fe-4S</keyword>
<keyword id="KW-0408">Iron</keyword>
<keyword id="KW-0411">Iron-sulfur</keyword>
<keyword id="KW-0456">Lyase</keyword>
<keyword id="KW-0479">Metal-binding</keyword>
<keyword id="KW-1185">Reference proteome</keyword>
<keyword id="KW-0949">S-adenosyl-L-methionine</keyword>
<keyword id="KW-0784">Thiamine biosynthesis</keyword>
<keyword id="KW-0862">Zinc</keyword>
<evidence type="ECO:0000255" key="1">
    <source>
        <dbReference type="HAMAP-Rule" id="MF_00089"/>
    </source>
</evidence>
<organism>
    <name type="scientific">Saccharolobus solfataricus (strain ATCC 35092 / DSM 1617 / JCM 11322 / P2)</name>
    <name type="common">Sulfolobus solfataricus</name>
    <dbReference type="NCBI Taxonomy" id="273057"/>
    <lineage>
        <taxon>Archaea</taxon>
        <taxon>Thermoproteota</taxon>
        <taxon>Thermoprotei</taxon>
        <taxon>Sulfolobales</taxon>
        <taxon>Sulfolobaceae</taxon>
        <taxon>Saccharolobus</taxon>
    </lineage>
</organism>
<comment type="function">
    <text evidence="1">Catalyzes the synthesis of the hydroxymethylpyrimidine phosphate (HMP-P) moiety of thiamine from aminoimidazole ribotide (AIR) in a radical S-adenosyl-L-methionine (SAM)-dependent reaction.</text>
</comment>
<comment type="catalytic activity">
    <reaction evidence="1">
        <text>5-amino-1-(5-phospho-beta-D-ribosyl)imidazole + S-adenosyl-L-methionine = 4-amino-2-methyl-5-(phosphooxymethyl)pyrimidine + CO + 5'-deoxyadenosine + formate + L-methionine + 3 H(+)</text>
        <dbReference type="Rhea" id="RHEA:24840"/>
        <dbReference type="ChEBI" id="CHEBI:15378"/>
        <dbReference type="ChEBI" id="CHEBI:15740"/>
        <dbReference type="ChEBI" id="CHEBI:17245"/>
        <dbReference type="ChEBI" id="CHEBI:17319"/>
        <dbReference type="ChEBI" id="CHEBI:57844"/>
        <dbReference type="ChEBI" id="CHEBI:58354"/>
        <dbReference type="ChEBI" id="CHEBI:59789"/>
        <dbReference type="ChEBI" id="CHEBI:137981"/>
        <dbReference type="EC" id="4.1.99.17"/>
    </reaction>
</comment>
<comment type="cofactor">
    <cofactor evidence="1">
        <name>[4Fe-4S] cluster</name>
        <dbReference type="ChEBI" id="CHEBI:49883"/>
    </cofactor>
    <text evidence="1">Binds 1 [4Fe-4S] cluster per subunit. The cluster is coordinated with 3 cysteines and an exchangeable S-adenosyl-L-methionine.</text>
</comment>
<comment type="pathway">
    <text evidence="1">Cofactor biosynthesis; thiamine diphosphate biosynthesis.</text>
</comment>
<comment type="similarity">
    <text evidence="1">Belongs to the ThiC family.</text>
</comment>
<dbReference type="EC" id="4.1.99.17" evidence="1"/>
<dbReference type="EMBL" id="AE006641">
    <property type="protein sequence ID" value="AAK41561.1"/>
    <property type="molecule type" value="Genomic_DNA"/>
</dbReference>
<dbReference type="PIR" id="B90288">
    <property type="entry name" value="B90288"/>
</dbReference>
<dbReference type="RefSeq" id="WP_010923318.1">
    <property type="nucleotide sequence ID" value="NC_002754.1"/>
</dbReference>
<dbReference type="SMR" id="Q97YJ8"/>
<dbReference type="FunCoup" id="Q97YJ8">
    <property type="interactions" value="124"/>
</dbReference>
<dbReference type="STRING" id="273057.SSO1324"/>
<dbReference type="PaxDb" id="273057-SSO1324"/>
<dbReference type="EnsemblBacteria" id="AAK41561">
    <property type="protein sequence ID" value="AAK41561"/>
    <property type="gene ID" value="SSO1324"/>
</dbReference>
<dbReference type="GeneID" id="1454340"/>
<dbReference type="KEGG" id="sso:SSO1324"/>
<dbReference type="PATRIC" id="fig|273057.12.peg.1325"/>
<dbReference type="eggNOG" id="arCOG02741">
    <property type="taxonomic scope" value="Archaea"/>
</dbReference>
<dbReference type="HOGENOM" id="CLU_013181_2_2_2"/>
<dbReference type="InParanoid" id="Q97YJ8"/>
<dbReference type="PhylomeDB" id="Q97YJ8"/>
<dbReference type="UniPathway" id="UPA00060"/>
<dbReference type="Proteomes" id="UP000001974">
    <property type="component" value="Chromosome"/>
</dbReference>
<dbReference type="GO" id="GO:0051539">
    <property type="term" value="F:4 iron, 4 sulfur cluster binding"/>
    <property type="evidence" value="ECO:0007669"/>
    <property type="project" value="UniProtKB-KW"/>
</dbReference>
<dbReference type="GO" id="GO:0016829">
    <property type="term" value="F:lyase activity"/>
    <property type="evidence" value="ECO:0007669"/>
    <property type="project" value="UniProtKB-KW"/>
</dbReference>
<dbReference type="GO" id="GO:0046872">
    <property type="term" value="F:metal ion binding"/>
    <property type="evidence" value="ECO:0007669"/>
    <property type="project" value="UniProtKB-KW"/>
</dbReference>
<dbReference type="GO" id="GO:0009228">
    <property type="term" value="P:thiamine biosynthetic process"/>
    <property type="evidence" value="ECO:0007669"/>
    <property type="project" value="UniProtKB-KW"/>
</dbReference>
<dbReference type="GO" id="GO:0009229">
    <property type="term" value="P:thiamine diphosphate biosynthetic process"/>
    <property type="evidence" value="ECO:0007669"/>
    <property type="project" value="UniProtKB-UniPathway"/>
</dbReference>
<dbReference type="Gene3D" id="3.20.20.540">
    <property type="entry name" value="Radical SAM ThiC family, central domain"/>
    <property type="match status" value="1"/>
</dbReference>
<dbReference type="InterPro" id="IPR038521">
    <property type="entry name" value="ThiC/Bza_core_dom"/>
</dbReference>
<dbReference type="InterPro" id="IPR002817">
    <property type="entry name" value="ThiC/BzaA/B"/>
</dbReference>
<dbReference type="NCBIfam" id="NF009895">
    <property type="entry name" value="PRK13352.1"/>
    <property type="match status" value="1"/>
</dbReference>
<dbReference type="NCBIfam" id="TIGR00190">
    <property type="entry name" value="thiC"/>
    <property type="match status" value="1"/>
</dbReference>
<dbReference type="PANTHER" id="PTHR30557:SF1">
    <property type="entry name" value="PHOSPHOMETHYLPYRIMIDINE SYNTHASE, CHLOROPLASTIC"/>
    <property type="match status" value="1"/>
</dbReference>
<dbReference type="PANTHER" id="PTHR30557">
    <property type="entry name" value="THIAMINE BIOSYNTHESIS PROTEIN THIC"/>
    <property type="match status" value="1"/>
</dbReference>
<dbReference type="Pfam" id="PF01964">
    <property type="entry name" value="ThiC_Rad_SAM"/>
    <property type="match status" value="1"/>
</dbReference>
<dbReference type="SFLD" id="SFLDF00407">
    <property type="entry name" value="phosphomethylpyrimidine_syntha"/>
    <property type="match status" value="1"/>
</dbReference>
<dbReference type="SFLD" id="SFLDS00113">
    <property type="entry name" value="Radical_SAM_Phosphomethylpyrim"/>
    <property type="match status" value="1"/>
</dbReference>
<feature type="chain" id="PRO_0000152874" description="Phosphomethylpyrimidine synthase 1">
    <location>
        <begin position="1"/>
        <end position="433"/>
    </location>
</feature>
<feature type="binding site" evidence="1">
    <location>
        <position position="66"/>
    </location>
    <ligand>
        <name>substrate</name>
    </ligand>
</feature>
<feature type="binding site" evidence="1">
    <location>
        <position position="94"/>
    </location>
    <ligand>
        <name>substrate</name>
    </ligand>
</feature>
<feature type="binding site" evidence="1">
    <location>
        <position position="123"/>
    </location>
    <ligand>
        <name>substrate</name>
    </ligand>
</feature>
<feature type="binding site" evidence="1">
    <location>
        <position position="162"/>
    </location>
    <ligand>
        <name>substrate</name>
    </ligand>
</feature>
<feature type="binding site" evidence="1">
    <location>
        <begin position="184"/>
        <end position="186"/>
    </location>
    <ligand>
        <name>substrate</name>
    </ligand>
</feature>
<feature type="binding site" evidence="1">
    <location>
        <begin position="225"/>
        <end position="228"/>
    </location>
    <ligand>
        <name>substrate</name>
    </ligand>
</feature>
<feature type="binding site" evidence="1">
    <location>
        <position position="264"/>
    </location>
    <ligand>
        <name>substrate</name>
    </ligand>
</feature>
<feature type="binding site" evidence="1">
    <location>
        <position position="268"/>
    </location>
    <ligand>
        <name>Zn(2+)</name>
        <dbReference type="ChEBI" id="CHEBI:29105"/>
    </ligand>
</feature>
<feature type="binding site" evidence="1">
    <location>
        <position position="291"/>
    </location>
    <ligand>
        <name>substrate</name>
    </ligand>
</feature>
<feature type="binding site" evidence="1">
    <location>
        <position position="332"/>
    </location>
    <ligand>
        <name>Zn(2+)</name>
        <dbReference type="ChEBI" id="CHEBI:29105"/>
    </ligand>
</feature>
<feature type="binding site" evidence="1">
    <location>
        <position position="408"/>
    </location>
    <ligand>
        <name>[4Fe-4S] cluster</name>
        <dbReference type="ChEBI" id="CHEBI:49883"/>
        <note>4Fe-4S-S-AdoMet</note>
    </ligand>
</feature>
<feature type="binding site" evidence="1">
    <location>
        <position position="411"/>
    </location>
    <ligand>
        <name>[4Fe-4S] cluster</name>
        <dbReference type="ChEBI" id="CHEBI:49883"/>
        <note>4Fe-4S-S-AdoMet</note>
    </ligand>
</feature>
<feature type="binding site" evidence="1">
    <location>
        <position position="415"/>
    </location>
    <ligand>
        <name>[4Fe-4S] cluster</name>
        <dbReference type="ChEBI" id="CHEBI:49883"/>
        <note>4Fe-4S-S-AdoMet</note>
    </ligand>
</feature>
<sequence>MAIIEEARSGQITDEMKEISKLEGIPVEKVRNRISECKIILIRNAKYPSKKLVPIGKGLTTKVNINIGTSDEVVNLQMELEKVKVANRWGDTLMDLSTGGDLDDIRREIIRASELPVGTVPVYQVFIESFKKKSGGAYFTEDELLSTVEKHLKDGVAFMTIHAGITKELAIRALKSNRIIPIVSRGGDMIAGWMIHNNSENPYRKHWGYLLEMFKEYDAVISLGDALRPGATGDAHDEFQVGELLETARLVKSALKEGVQVMVEGPGHVPLNEIAWDVKLMKKLTGGVPYYVLGPLPIDVGAPYDHIASAIGAAISSAAGADLLCYLTPAEHLGLPTVKQVEEGAIAYRIAAHAGDVVKLGRRVRKWDDEVSYYRGKLEWDNMISRLIDPQRAYQVYTQFGIPKVKACTMCGGYCPMMWAMDQVRKIGSSSSL</sequence>
<name>THIC1_SACS2</name>
<reference key="1">
    <citation type="journal article" date="2001" name="Proc. Natl. Acad. Sci. U.S.A.">
        <title>The complete genome of the crenarchaeon Sulfolobus solfataricus P2.</title>
        <authorList>
            <person name="She Q."/>
            <person name="Singh R.K."/>
            <person name="Confalonieri F."/>
            <person name="Zivanovic Y."/>
            <person name="Allard G."/>
            <person name="Awayez M.J."/>
            <person name="Chan-Weiher C.C.-Y."/>
            <person name="Clausen I.G."/>
            <person name="Curtis B.A."/>
            <person name="De Moors A."/>
            <person name="Erauso G."/>
            <person name="Fletcher C."/>
            <person name="Gordon P.M.K."/>
            <person name="Heikamp-de Jong I."/>
            <person name="Jeffries A.C."/>
            <person name="Kozera C.J."/>
            <person name="Medina N."/>
            <person name="Peng X."/>
            <person name="Thi-Ngoc H.P."/>
            <person name="Redder P."/>
            <person name="Schenk M.E."/>
            <person name="Theriault C."/>
            <person name="Tolstrup N."/>
            <person name="Charlebois R.L."/>
            <person name="Doolittle W.F."/>
            <person name="Duguet M."/>
            <person name="Gaasterland T."/>
            <person name="Garrett R.A."/>
            <person name="Ragan M.A."/>
            <person name="Sensen C.W."/>
            <person name="Van der Oost J."/>
        </authorList>
    </citation>
    <scope>NUCLEOTIDE SEQUENCE [LARGE SCALE GENOMIC DNA]</scope>
    <source>
        <strain>ATCC 35092 / DSM 1617 / JCM 11322 / P2</strain>
    </source>
</reference>